<evidence type="ECO:0000255" key="1">
    <source>
        <dbReference type="HAMAP-Rule" id="MF_00120"/>
    </source>
</evidence>
<sequence>MELYYLSAKEITEKIKAKEISAVEVAKATFDRIEAVEPKIQAYVTVTRELGLKMAREVDEKIARGEDPGPLAGVPVAIKDNMSTAGIRTTCSSKILENYIPPYDATVVEKLKEAGAVFTGKTNLDEFAMGSSTENSRFFPTRNPWDLERVPGGSSGGSAASVAAGEAVVALGSDTGGSIRQPAAFCGIVGLKPTYGAVSRYGLVAFASSLDQIGPFARTVEDAALLLNVIAGHDPKDSTSADIEYPDYLSFLNQDIKGLKIGLPKEYFIDGIDAGVKKAIDDAIKVLESLGAVFEEVSLPHTKYSLPVYYLIAPAEASSNLARYDGVRYGYRDFEAEDVVEMFSRTRAEGFGAEVKRRIMLGTYALSAGYYDAYYLKALKVRTLIKEDFDRAFTKVDLLLTPTTPTPAFKFGEKTSDPVSMYLSDIFTMAVNLAGLPGISVPAGFDGHLPVSFQLIGKPFDEGTLLKVAHAFEQNTEFHKARPKL</sequence>
<gene>
    <name evidence="1" type="primary">gatA</name>
    <name type="ordered locus">CHY_1102</name>
</gene>
<organism>
    <name type="scientific">Carboxydothermus hydrogenoformans (strain ATCC BAA-161 / DSM 6008 / Z-2901)</name>
    <dbReference type="NCBI Taxonomy" id="246194"/>
    <lineage>
        <taxon>Bacteria</taxon>
        <taxon>Bacillati</taxon>
        <taxon>Bacillota</taxon>
        <taxon>Clostridia</taxon>
        <taxon>Thermoanaerobacterales</taxon>
        <taxon>Thermoanaerobacteraceae</taxon>
        <taxon>Carboxydothermus</taxon>
    </lineage>
</organism>
<accession>Q3AD36</accession>
<comment type="function">
    <text evidence="1">Allows the formation of correctly charged Gln-tRNA(Gln) through the transamidation of misacylated Glu-tRNA(Gln) in organisms which lack glutaminyl-tRNA synthetase. The reaction takes place in the presence of glutamine and ATP through an activated gamma-phospho-Glu-tRNA(Gln).</text>
</comment>
<comment type="catalytic activity">
    <reaction evidence="1">
        <text>L-glutamyl-tRNA(Gln) + L-glutamine + ATP + H2O = L-glutaminyl-tRNA(Gln) + L-glutamate + ADP + phosphate + H(+)</text>
        <dbReference type="Rhea" id="RHEA:17521"/>
        <dbReference type="Rhea" id="RHEA-COMP:9681"/>
        <dbReference type="Rhea" id="RHEA-COMP:9684"/>
        <dbReference type="ChEBI" id="CHEBI:15377"/>
        <dbReference type="ChEBI" id="CHEBI:15378"/>
        <dbReference type="ChEBI" id="CHEBI:29985"/>
        <dbReference type="ChEBI" id="CHEBI:30616"/>
        <dbReference type="ChEBI" id="CHEBI:43474"/>
        <dbReference type="ChEBI" id="CHEBI:58359"/>
        <dbReference type="ChEBI" id="CHEBI:78520"/>
        <dbReference type="ChEBI" id="CHEBI:78521"/>
        <dbReference type="ChEBI" id="CHEBI:456216"/>
        <dbReference type="EC" id="6.3.5.7"/>
    </reaction>
</comment>
<comment type="subunit">
    <text evidence="1">Heterotrimer of A, B and C subunits.</text>
</comment>
<comment type="similarity">
    <text evidence="1">Belongs to the amidase family. GatA subfamily.</text>
</comment>
<feature type="chain" id="PRO_0000241085" description="Glutamyl-tRNA(Gln) amidotransferase subunit A">
    <location>
        <begin position="1"/>
        <end position="485"/>
    </location>
</feature>
<feature type="active site" description="Charge relay system" evidence="1">
    <location>
        <position position="79"/>
    </location>
</feature>
<feature type="active site" description="Charge relay system" evidence="1">
    <location>
        <position position="154"/>
    </location>
</feature>
<feature type="active site" description="Acyl-ester intermediate" evidence="1">
    <location>
        <position position="178"/>
    </location>
</feature>
<dbReference type="EC" id="6.3.5.7" evidence="1"/>
<dbReference type="EMBL" id="CP000141">
    <property type="protein sequence ID" value="ABB15182.1"/>
    <property type="molecule type" value="Genomic_DNA"/>
</dbReference>
<dbReference type="RefSeq" id="WP_011344024.1">
    <property type="nucleotide sequence ID" value="NC_007503.1"/>
</dbReference>
<dbReference type="SMR" id="Q3AD36"/>
<dbReference type="FunCoup" id="Q3AD36">
    <property type="interactions" value="448"/>
</dbReference>
<dbReference type="STRING" id="246194.CHY_1102"/>
<dbReference type="KEGG" id="chy:CHY_1102"/>
<dbReference type="eggNOG" id="COG0154">
    <property type="taxonomic scope" value="Bacteria"/>
</dbReference>
<dbReference type="HOGENOM" id="CLU_009600_0_3_9"/>
<dbReference type="InParanoid" id="Q3AD36"/>
<dbReference type="OrthoDB" id="9811471at2"/>
<dbReference type="Proteomes" id="UP000002706">
    <property type="component" value="Chromosome"/>
</dbReference>
<dbReference type="GO" id="GO:0030956">
    <property type="term" value="C:glutamyl-tRNA(Gln) amidotransferase complex"/>
    <property type="evidence" value="ECO:0007669"/>
    <property type="project" value="InterPro"/>
</dbReference>
<dbReference type="GO" id="GO:0005524">
    <property type="term" value="F:ATP binding"/>
    <property type="evidence" value="ECO:0007669"/>
    <property type="project" value="UniProtKB-KW"/>
</dbReference>
<dbReference type="GO" id="GO:0050567">
    <property type="term" value="F:glutaminyl-tRNA synthase (glutamine-hydrolyzing) activity"/>
    <property type="evidence" value="ECO:0007669"/>
    <property type="project" value="UniProtKB-UniRule"/>
</dbReference>
<dbReference type="GO" id="GO:0006412">
    <property type="term" value="P:translation"/>
    <property type="evidence" value="ECO:0007669"/>
    <property type="project" value="UniProtKB-UniRule"/>
</dbReference>
<dbReference type="Gene3D" id="3.90.1300.10">
    <property type="entry name" value="Amidase signature (AS) domain"/>
    <property type="match status" value="1"/>
</dbReference>
<dbReference type="HAMAP" id="MF_00120">
    <property type="entry name" value="GatA"/>
    <property type="match status" value="1"/>
</dbReference>
<dbReference type="InterPro" id="IPR000120">
    <property type="entry name" value="Amidase"/>
</dbReference>
<dbReference type="InterPro" id="IPR020556">
    <property type="entry name" value="Amidase_CS"/>
</dbReference>
<dbReference type="InterPro" id="IPR023631">
    <property type="entry name" value="Amidase_dom"/>
</dbReference>
<dbReference type="InterPro" id="IPR036928">
    <property type="entry name" value="AS_sf"/>
</dbReference>
<dbReference type="InterPro" id="IPR004412">
    <property type="entry name" value="GatA"/>
</dbReference>
<dbReference type="NCBIfam" id="TIGR00132">
    <property type="entry name" value="gatA"/>
    <property type="match status" value="1"/>
</dbReference>
<dbReference type="PANTHER" id="PTHR11895:SF151">
    <property type="entry name" value="GLUTAMYL-TRNA(GLN) AMIDOTRANSFERASE SUBUNIT A"/>
    <property type="match status" value="1"/>
</dbReference>
<dbReference type="PANTHER" id="PTHR11895">
    <property type="entry name" value="TRANSAMIDASE"/>
    <property type="match status" value="1"/>
</dbReference>
<dbReference type="Pfam" id="PF01425">
    <property type="entry name" value="Amidase"/>
    <property type="match status" value="1"/>
</dbReference>
<dbReference type="SUPFAM" id="SSF75304">
    <property type="entry name" value="Amidase signature (AS) enzymes"/>
    <property type="match status" value="1"/>
</dbReference>
<dbReference type="PROSITE" id="PS00571">
    <property type="entry name" value="AMIDASES"/>
    <property type="match status" value="1"/>
</dbReference>
<keyword id="KW-0067">ATP-binding</keyword>
<keyword id="KW-0436">Ligase</keyword>
<keyword id="KW-0547">Nucleotide-binding</keyword>
<keyword id="KW-0648">Protein biosynthesis</keyword>
<keyword id="KW-1185">Reference proteome</keyword>
<proteinExistence type="inferred from homology"/>
<reference key="1">
    <citation type="journal article" date="2005" name="PLoS Genet.">
        <title>Life in hot carbon monoxide: the complete genome sequence of Carboxydothermus hydrogenoformans Z-2901.</title>
        <authorList>
            <person name="Wu M."/>
            <person name="Ren Q."/>
            <person name="Durkin A.S."/>
            <person name="Daugherty S.C."/>
            <person name="Brinkac L.M."/>
            <person name="Dodson R.J."/>
            <person name="Madupu R."/>
            <person name="Sullivan S.A."/>
            <person name="Kolonay J.F."/>
            <person name="Nelson W.C."/>
            <person name="Tallon L.J."/>
            <person name="Jones K.M."/>
            <person name="Ulrich L.E."/>
            <person name="Gonzalez J.M."/>
            <person name="Zhulin I.B."/>
            <person name="Robb F.T."/>
            <person name="Eisen J.A."/>
        </authorList>
    </citation>
    <scope>NUCLEOTIDE SEQUENCE [LARGE SCALE GENOMIC DNA]</scope>
    <source>
        <strain>ATCC BAA-161 / DSM 6008 / Z-2901</strain>
    </source>
</reference>
<protein>
    <recommendedName>
        <fullName evidence="1">Glutamyl-tRNA(Gln) amidotransferase subunit A</fullName>
        <shortName evidence="1">Glu-ADT subunit A</shortName>
        <ecNumber evidence="1">6.3.5.7</ecNumber>
    </recommendedName>
</protein>
<name>GATA_CARHZ</name>